<comment type="subcellular location">
    <subcellularLocation>
        <location evidence="1">Nucleus</location>
    </subcellularLocation>
</comment>
<sequence>MVELIKVPKIEQEEGNADSHGKEKADVVHEEKTEKVKRRRKRVSDPQRKKACVDCTKRCIRIHGMASSSSEKARPTPTLPSFFKIMVGYFSENMDIPLPFARTITDMTGSNVYLEDAYGLRWRVRLYLHDDVLSFGHGWKNFVLDHDISVGEFLVFRQIARSVFTVQIFAISACERIHLCERNKRQSRKRKPGRKTGYPANNQMVKVSSKDVVKRRKKQRTDEQIYDLDPRQHDMPVRVCIDSGSEQRCSESSVKELDAAPDKSHAVVQVPATECNADPSYNAAGMKTIKNLEAIGASSSTKDVTWDANKSEDYPSFSYPESSNVMTADKESERSHQDRPMQLYCELGLEDGNAETENCENSNVLENAELRTPLAMMDLNEVGIDDIFLSADIYEFDSDFCSPEAFSVDVNTEGLVSNGRTPGDCFGVPETSRCLENKQMTDVPRTSTDDGSIAVHGIDINALPSNTYPDIGQGNTYPDIDAAPDDCKKDKDVLHSECNKVAQKAHSSVKQDITKDGPRQIAAEIMSSDPKTCELTYVRKNSVQPGISSVSQWNNSKGQESGGTKSCVVLAVAANSKKFCITIPPPDQTWLELPRRLPVLPRTKKQARKILILKDPSMRLWPVLYQCTPKFNGFIAGWADISRENNLREGDTCEFELCSNSELSFQVLVPNLQ</sequence>
<evidence type="ECO:0000255" key="1">
    <source>
        <dbReference type="PROSITE-ProRule" id="PRU00326"/>
    </source>
</evidence>
<evidence type="ECO:0000256" key="2">
    <source>
        <dbReference type="SAM" id="MobiDB-lite"/>
    </source>
</evidence>
<organism>
    <name type="scientific">Oryza sativa subsp. japonica</name>
    <name type="common">Rice</name>
    <dbReference type="NCBI Taxonomy" id="39947"/>
    <lineage>
        <taxon>Eukaryota</taxon>
        <taxon>Viridiplantae</taxon>
        <taxon>Streptophyta</taxon>
        <taxon>Embryophyta</taxon>
        <taxon>Tracheophyta</taxon>
        <taxon>Spermatophyta</taxon>
        <taxon>Magnoliopsida</taxon>
        <taxon>Liliopsida</taxon>
        <taxon>Poales</taxon>
        <taxon>Poaceae</taxon>
        <taxon>BOP clade</taxon>
        <taxon>Oryzoideae</taxon>
        <taxon>Oryzeae</taxon>
        <taxon>Oryzinae</taxon>
        <taxon>Oryza</taxon>
        <taxon>Oryza sativa</taxon>
    </lineage>
</organism>
<reference key="1">
    <citation type="journal article" date="2002" name="Nature">
        <title>The genome sequence and structure of rice chromosome 1.</title>
        <authorList>
            <person name="Sasaki T."/>
            <person name="Matsumoto T."/>
            <person name="Yamamoto K."/>
            <person name="Sakata K."/>
            <person name="Baba T."/>
            <person name="Katayose Y."/>
            <person name="Wu J."/>
            <person name="Niimura Y."/>
            <person name="Cheng Z."/>
            <person name="Nagamura Y."/>
            <person name="Antonio B.A."/>
            <person name="Kanamori H."/>
            <person name="Hosokawa S."/>
            <person name="Masukawa M."/>
            <person name="Arikawa K."/>
            <person name="Chiden Y."/>
            <person name="Hayashi M."/>
            <person name="Okamoto M."/>
            <person name="Ando T."/>
            <person name="Aoki H."/>
            <person name="Arita K."/>
            <person name="Hamada M."/>
            <person name="Harada C."/>
            <person name="Hijishita S."/>
            <person name="Honda M."/>
            <person name="Ichikawa Y."/>
            <person name="Idonuma A."/>
            <person name="Iijima M."/>
            <person name="Ikeda M."/>
            <person name="Ikeno M."/>
            <person name="Ito S."/>
            <person name="Ito T."/>
            <person name="Ito Y."/>
            <person name="Ito Y."/>
            <person name="Iwabuchi A."/>
            <person name="Kamiya K."/>
            <person name="Karasawa W."/>
            <person name="Katagiri S."/>
            <person name="Kikuta A."/>
            <person name="Kobayashi N."/>
            <person name="Kono I."/>
            <person name="Machita K."/>
            <person name="Maehara T."/>
            <person name="Mizuno H."/>
            <person name="Mizubayashi T."/>
            <person name="Mukai Y."/>
            <person name="Nagasaki H."/>
            <person name="Nakashima M."/>
            <person name="Nakama Y."/>
            <person name="Nakamichi Y."/>
            <person name="Nakamura M."/>
            <person name="Namiki N."/>
            <person name="Negishi M."/>
            <person name="Ohta I."/>
            <person name="Ono N."/>
            <person name="Saji S."/>
            <person name="Sakai K."/>
            <person name="Shibata M."/>
            <person name="Shimokawa T."/>
            <person name="Shomura A."/>
            <person name="Song J."/>
            <person name="Takazaki Y."/>
            <person name="Terasawa K."/>
            <person name="Tsuji K."/>
            <person name="Waki K."/>
            <person name="Yamagata H."/>
            <person name="Yamane H."/>
            <person name="Yoshiki S."/>
            <person name="Yoshihara R."/>
            <person name="Yukawa K."/>
            <person name="Zhong H."/>
            <person name="Iwama H."/>
            <person name="Endo T."/>
            <person name="Ito H."/>
            <person name="Hahn J.H."/>
            <person name="Kim H.-I."/>
            <person name="Eun M.-Y."/>
            <person name="Yano M."/>
            <person name="Jiang J."/>
            <person name="Gojobori T."/>
        </authorList>
    </citation>
    <scope>NUCLEOTIDE SEQUENCE [LARGE SCALE GENOMIC DNA]</scope>
    <source>
        <strain>cv. Nipponbare</strain>
    </source>
</reference>
<reference key="2">
    <citation type="journal article" date="2005" name="Nature">
        <title>The map-based sequence of the rice genome.</title>
        <authorList>
            <consortium name="International rice genome sequencing project (IRGSP)"/>
        </authorList>
    </citation>
    <scope>NUCLEOTIDE SEQUENCE [LARGE SCALE GENOMIC DNA]</scope>
    <source>
        <strain>cv. Nipponbare</strain>
    </source>
</reference>
<reference key="3">
    <citation type="journal article" date="2008" name="Nucleic Acids Res.">
        <title>The rice annotation project database (RAP-DB): 2008 update.</title>
        <authorList>
            <consortium name="The rice annotation project (RAP)"/>
        </authorList>
    </citation>
    <scope>GENOME REANNOTATION</scope>
    <source>
        <strain>cv. Nipponbare</strain>
    </source>
</reference>
<reference key="4">
    <citation type="journal article" date="2013" name="Rice">
        <title>Improvement of the Oryza sativa Nipponbare reference genome using next generation sequence and optical map data.</title>
        <authorList>
            <person name="Kawahara Y."/>
            <person name="de la Bastide M."/>
            <person name="Hamilton J.P."/>
            <person name="Kanamori H."/>
            <person name="McCombie W.R."/>
            <person name="Ouyang S."/>
            <person name="Schwartz D.C."/>
            <person name="Tanaka T."/>
            <person name="Wu J."/>
            <person name="Zhou S."/>
            <person name="Childs K.L."/>
            <person name="Davidson R.M."/>
            <person name="Lin H."/>
            <person name="Quesada-Ocampo L."/>
            <person name="Vaillancourt B."/>
            <person name="Sakai H."/>
            <person name="Lee S.S."/>
            <person name="Kim J."/>
            <person name="Numa H."/>
            <person name="Itoh T."/>
            <person name="Buell C.R."/>
            <person name="Matsumoto T."/>
        </authorList>
    </citation>
    <scope>GENOME REANNOTATION</scope>
    <source>
        <strain>cv. Nipponbare</strain>
    </source>
</reference>
<reference key="5">
    <citation type="journal article" date="2005" name="PLoS Biol.">
        <title>The genomes of Oryza sativa: a history of duplications.</title>
        <authorList>
            <person name="Yu J."/>
            <person name="Wang J."/>
            <person name="Lin W."/>
            <person name="Li S."/>
            <person name="Li H."/>
            <person name="Zhou J."/>
            <person name="Ni P."/>
            <person name="Dong W."/>
            <person name="Hu S."/>
            <person name="Zeng C."/>
            <person name="Zhang J."/>
            <person name="Zhang Y."/>
            <person name="Li R."/>
            <person name="Xu Z."/>
            <person name="Li S."/>
            <person name="Li X."/>
            <person name="Zheng H."/>
            <person name="Cong L."/>
            <person name="Lin L."/>
            <person name="Yin J."/>
            <person name="Geng J."/>
            <person name="Li G."/>
            <person name="Shi J."/>
            <person name="Liu J."/>
            <person name="Lv H."/>
            <person name="Li J."/>
            <person name="Wang J."/>
            <person name="Deng Y."/>
            <person name="Ran L."/>
            <person name="Shi X."/>
            <person name="Wang X."/>
            <person name="Wu Q."/>
            <person name="Li C."/>
            <person name="Ren X."/>
            <person name="Wang J."/>
            <person name="Wang X."/>
            <person name="Li D."/>
            <person name="Liu D."/>
            <person name="Zhang X."/>
            <person name="Ji Z."/>
            <person name="Zhao W."/>
            <person name="Sun Y."/>
            <person name="Zhang Z."/>
            <person name="Bao J."/>
            <person name="Han Y."/>
            <person name="Dong L."/>
            <person name="Ji J."/>
            <person name="Chen P."/>
            <person name="Wu S."/>
            <person name="Liu J."/>
            <person name="Xiao Y."/>
            <person name="Bu D."/>
            <person name="Tan J."/>
            <person name="Yang L."/>
            <person name="Ye C."/>
            <person name="Zhang J."/>
            <person name="Xu J."/>
            <person name="Zhou Y."/>
            <person name="Yu Y."/>
            <person name="Zhang B."/>
            <person name="Zhuang S."/>
            <person name="Wei H."/>
            <person name="Liu B."/>
            <person name="Lei M."/>
            <person name="Yu H."/>
            <person name="Li Y."/>
            <person name="Xu H."/>
            <person name="Wei S."/>
            <person name="He X."/>
            <person name="Fang L."/>
            <person name="Zhang Z."/>
            <person name="Zhang Y."/>
            <person name="Huang X."/>
            <person name="Su Z."/>
            <person name="Tong W."/>
            <person name="Li J."/>
            <person name="Tong Z."/>
            <person name="Li S."/>
            <person name="Ye J."/>
            <person name="Wang L."/>
            <person name="Fang L."/>
            <person name="Lei T."/>
            <person name="Chen C.-S."/>
            <person name="Chen H.-C."/>
            <person name="Xu Z."/>
            <person name="Li H."/>
            <person name="Huang H."/>
            <person name="Zhang F."/>
            <person name="Xu H."/>
            <person name="Li N."/>
            <person name="Zhao C."/>
            <person name="Li S."/>
            <person name="Dong L."/>
            <person name="Huang Y."/>
            <person name="Li L."/>
            <person name="Xi Y."/>
            <person name="Qi Q."/>
            <person name="Li W."/>
            <person name="Zhang B."/>
            <person name="Hu W."/>
            <person name="Zhang Y."/>
            <person name="Tian X."/>
            <person name="Jiao Y."/>
            <person name="Liang X."/>
            <person name="Jin J."/>
            <person name="Gao L."/>
            <person name="Zheng W."/>
            <person name="Hao B."/>
            <person name="Liu S.-M."/>
            <person name="Wang W."/>
            <person name="Yuan L."/>
            <person name="Cao M."/>
            <person name="McDermott J."/>
            <person name="Samudrala R."/>
            <person name="Wang J."/>
            <person name="Wong G.K.-S."/>
            <person name="Yang H."/>
        </authorList>
    </citation>
    <scope>NUCLEOTIDE SEQUENCE [LARGE SCALE GENOMIC DNA]</scope>
    <source>
        <strain>cv. Nipponbare</strain>
    </source>
</reference>
<reference key="6">
    <citation type="journal article" date="2003" name="Science">
        <title>Collection, mapping, and annotation of over 28,000 cDNA clones from japonica rice.</title>
        <authorList>
            <consortium name="The rice full-length cDNA consortium"/>
        </authorList>
    </citation>
    <scope>NUCLEOTIDE SEQUENCE [LARGE SCALE MRNA]</scope>
    <source>
        <strain>cv. Nipponbare</strain>
    </source>
</reference>
<keyword id="KW-0238">DNA-binding</keyword>
<keyword id="KW-0539">Nucleus</keyword>
<keyword id="KW-1185">Reference proteome</keyword>
<keyword id="KW-0677">Repeat</keyword>
<keyword id="KW-0804">Transcription</keyword>
<keyword id="KW-0805">Transcription regulation</keyword>
<name>Y1054_ORYSJ</name>
<accession>Q5N6V0</accession>
<accession>A0A0P0VBT1</accession>
<feature type="chain" id="PRO_0000378041" description="B3 domain-containing protein Os01g0905400">
    <location>
        <begin position="1"/>
        <end position="673"/>
    </location>
</feature>
<feature type="DNA-binding region" description="TF-B3 1" evidence="1">
    <location>
        <begin position="79"/>
        <end position="172"/>
    </location>
</feature>
<feature type="DNA-binding region" description="TF-B3 2" evidence="1">
    <location>
        <begin position="576"/>
        <end position="671"/>
    </location>
</feature>
<feature type="region of interest" description="Disordered" evidence="2">
    <location>
        <begin position="1"/>
        <end position="44"/>
    </location>
</feature>
<feature type="region of interest" description="Disordered" evidence="2">
    <location>
        <begin position="315"/>
        <end position="337"/>
    </location>
</feature>
<feature type="compositionally biased region" description="Basic and acidic residues" evidence="2">
    <location>
        <begin position="1"/>
        <end position="34"/>
    </location>
</feature>
<feature type="compositionally biased region" description="Basic and acidic residues" evidence="2">
    <location>
        <begin position="328"/>
        <end position="337"/>
    </location>
</feature>
<dbReference type="EMBL" id="AP006839">
    <property type="protein sequence ID" value="BAD82806.1"/>
    <property type="molecule type" value="Genomic_DNA"/>
</dbReference>
<dbReference type="EMBL" id="AP008207">
    <property type="protein sequence ID" value="BAF07042.1"/>
    <property type="molecule type" value="Genomic_DNA"/>
</dbReference>
<dbReference type="EMBL" id="AP014957">
    <property type="protein sequence ID" value="BAS75787.1"/>
    <property type="molecule type" value="Genomic_DNA"/>
</dbReference>
<dbReference type="EMBL" id="CM000138">
    <property type="protein sequence ID" value="EAZ14539.1"/>
    <property type="molecule type" value="Genomic_DNA"/>
</dbReference>
<dbReference type="EMBL" id="AK063530">
    <property type="protein sequence ID" value="BAG88754.1"/>
    <property type="molecule type" value="mRNA"/>
</dbReference>
<dbReference type="RefSeq" id="XP_015645658.1">
    <property type="nucleotide sequence ID" value="XM_015790172.1"/>
</dbReference>
<dbReference type="SMR" id="Q5N6V0"/>
<dbReference type="FunCoup" id="Q5N6V0">
    <property type="interactions" value="2"/>
</dbReference>
<dbReference type="STRING" id="39947.Q5N6V0"/>
<dbReference type="PaxDb" id="39947-Q5N6V0"/>
<dbReference type="EnsemblPlants" id="Os01t0905400-01">
    <property type="protein sequence ID" value="Os01t0905400-01"/>
    <property type="gene ID" value="Os01g0905400"/>
</dbReference>
<dbReference type="Gramene" id="Os01t0905400-01">
    <property type="protein sequence ID" value="Os01t0905400-01"/>
    <property type="gene ID" value="Os01g0905400"/>
</dbReference>
<dbReference type="KEGG" id="dosa:Os01g0905400"/>
<dbReference type="eggNOG" id="ENOG502RXIH">
    <property type="taxonomic scope" value="Eukaryota"/>
</dbReference>
<dbReference type="HOGENOM" id="CLU_459579_0_0_1"/>
<dbReference type="InParanoid" id="Q5N6V0"/>
<dbReference type="OMA" id="CEFELCS"/>
<dbReference type="OrthoDB" id="1666376at2759"/>
<dbReference type="Proteomes" id="UP000000763">
    <property type="component" value="Chromosome 1"/>
</dbReference>
<dbReference type="Proteomes" id="UP000007752">
    <property type="component" value="Chromosome 1"/>
</dbReference>
<dbReference type="Proteomes" id="UP000059680">
    <property type="component" value="Chromosome 1"/>
</dbReference>
<dbReference type="GO" id="GO:0005634">
    <property type="term" value="C:nucleus"/>
    <property type="evidence" value="ECO:0007669"/>
    <property type="project" value="UniProtKB-SubCell"/>
</dbReference>
<dbReference type="GO" id="GO:0003677">
    <property type="term" value="F:DNA binding"/>
    <property type="evidence" value="ECO:0007669"/>
    <property type="project" value="UniProtKB-KW"/>
</dbReference>
<dbReference type="CDD" id="cd10017">
    <property type="entry name" value="B3_DNA"/>
    <property type="match status" value="2"/>
</dbReference>
<dbReference type="Gene3D" id="2.40.330.10">
    <property type="entry name" value="DNA-binding pseudobarrel domain"/>
    <property type="match status" value="2"/>
</dbReference>
<dbReference type="InterPro" id="IPR003340">
    <property type="entry name" value="B3_DNA-bd"/>
</dbReference>
<dbReference type="InterPro" id="IPR015300">
    <property type="entry name" value="DNA-bd_pseudobarrel_sf"/>
</dbReference>
<dbReference type="InterPro" id="IPR039218">
    <property type="entry name" value="REM_fam"/>
</dbReference>
<dbReference type="PANTHER" id="PTHR31674:SF61">
    <property type="entry name" value="B3 DOMAIN-CONTAINING PROTEIN OS01G0905400"/>
    <property type="match status" value="1"/>
</dbReference>
<dbReference type="PANTHER" id="PTHR31674">
    <property type="entry name" value="B3 DOMAIN-CONTAINING PROTEIN REM-LIKE 3-RELATED"/>
    <property type="match status" value="1"/>
</dbReference>
<dbReference type="Pfam" id="PF02362">
    <property type="entry name" value="B3"/>
    <property type="match status" value="2"/>
</dbReference>
<dbReference type="SMART" id="SM01019">
    <property type="entry name" value="B3"/>
    <property type="match status" value="2"/>
</dbReference>
<dbReference type="SUPFAM" id="SSF101936">
    <property type="entry name" value="DNA-binding pseudobarrel domain"/>
    <property type="match status" value="2"/>
</dbReference>
<dbReference type="PROSITE" id="PS50863">
    <property type="entry name" value="B3"/>
    <property type="match status" value="2"/>
</dbReference>
<proteinExistence type="evidence at transcript level"/>
<protein>
    <recommendedName>
        <fullName>B3 domain-containing protein Os01g0905400</fullName>
    </recommendedName>
</protein>
<gene>
    <name type="ordered locus">Os01g0905400</name>
    <name type="ordered locus">LOC_Os01g67830</name>
    <name type="ORF">OsJ_04461</name>
    <name type="ORF">OSJNOa108M02.5</name>
</gene>